<name>RS4_VESOH</name>
<reference key="1">
    <citation type="journal article" date="2007" name="Curr. Biol.">
        <title>Reduced genome of the thioautotrophic intracellular symbiont in a deep-sea clam, Calyptogena okutanii.</title>
        <authorList>
            <person name="Kuwahara H."/>
            <person name="Yoshida T."/>
            <person name="Takaki Y."/>
            <person name="Shimamura S."/>
            <person name="Nishi S."/>
            <person name="Harada M."/>
            <person name="Matsuyama K."/>
            <person name="Takishita K."/>
            <person name="Kawato M."/>
            <person name="Uematsu K."/>
            <person name="Fujiwara Y."/>
            <person name="Sato T."/>
            <person name="Kato C."/>
            <person name="Kitagawa M."/>
            <person name="Kato I."/>
            <person name="Maruyama T."/>
        </authorList>
    </citation>
    <scope>NUCLEOTIDE SEQUENCE [LARGE SCALE GENOMIC DNA]</scope>
    <source>
        <strain>HA</strain>
    </source>
</reference>
<organism>
    <name type="scientific">Vesicomyosocius okutanii subsp. Calyptogena okutanii (strain HA)</name>
    <dbReference type="NCBI Taxonomy" id="412965"/>
    <lineage>
        <taxon>Bacteria</taxon>
        <taxon>Pseudomonadati</taxon>
        <taxon>Pseudomonadota</taxon>
        <taxon>Gammaproteobacteria</taxon>
        <taxon>Candidatus Pseudothioglobaceae</taxon>
        <taxon>Candidatus Vesicomyosocius</taxon>
    </lineage>
</organism>
<comment type="function">
    <text evidence="1">One of the primary rRNA binding proteins, it binds directly to 16S rRNA where it nucleates assembly of the body of the 30S subunit.</text>
</comment>
<comment type="function">
    <text evidence="1">With S5 and S12 plays an important role in translational accuracy.</text>
</comment>
<comment type="subunit">
    <text evidence="1">Part of the 30S ribosomal subunit. Contacts protein S5. The interaction surface between S4 and S5 is involved in control of translational fidelity.</text>
</comment>
<comment type="similarity">
    <text evidence="1">Belongs to the universal ribosomal protein uS4 family.</text>
</comment>
<gene>
    <name evidence="1" type="primary">rpsD</name>
    <name type="ordered locus">COSY_0193</name>
</gene>
<protein>
    <recommendedName>
        <fullName evidence="1">Small ribosomal subunit protein uS4</fullName>
    </recommendedName>
    <alternativeName>
        <fullName evidence="2">30S ribosomal protein S4</fullName>
    </alternativeName>
</protein>
<dbReference type="EMBL" id="AP009247">
    <property type="protein sequence ID" value="BAF61323.1"/>
    <property type="molecule type" value="Genomic_DNA"/>
</dbReference>
<dbReference type="RefSeq" id="WP_011929593.1">
    <property type="nucleotide sequence ID" value="NC_009465.1"/>
</dbReference>
<dbReference type="SMR" id="A5CXI8"/>
<dbReference type="STRING" id="412965.COSY_0193"/>
<dbReference type="KEGG" id="vok:COSY_0193"/>
<dbReference type="eggNOG" id="COG0522">
    <property type="taxonomic scope" value="Bacteria"/>
</dbReference>
<dbReference type="HOGENOM" id="CLU_092403_0_2_6"/>
<dbReference type="OrthoDB" id="9803672at2"/>
<dbReference type="Proteomes" id="UP000000247">
    <property type="component" value="Chromosome"/>
</dbReference>
<dbReference type="GO" id="GO:0015935">
    <property type="term" value="C:small ribosomal subunit"/>
    <property type="evidence" value="ECO:0007669"/>
    <property type="project" value="InterPro"/>
</dbReference>
<dbReference type="GO" id="GO:0019843">
    <property type="term" value="F:rRNA binding"/>
    <property type="evidence" value="ECO:0007669"/>
    <property type="project" value="UniProtKB-UniRule"/>
</dbReference>
<dbReference type="GO" id="GO:0003735">
    <property type="term" value="F:structural constituent of ribosome"/>
    <property type="evidence" value="ECO:0007669"/>
    <property type="project" value="InterPro"/>
</dbReference>
<dbReference type="GO" id="GO:0042274">
    <property type="term" value="P:ribosomal small subunit biogenesis"/>
    <property type="evidence" value="ECO:0007669"/>
    <property type="project" value="TreeGrafter"/>
</dbReference>
<dbReference type="GO" id="GO:0006412">
    <property type="term" value="P:translation"/>
    <property type="evidence" value="ECO:0007669"/>
    <property type="project" value="UniProtKB-UniRule"/>
</dbReference>
<dbReference type="CDD" id="cd00165">
    <property type="entry name" value="S4"/>
    <property type="match status" value="1"/>
</dbReference>
<dbReference type="FunFam" id="1.10.1050.10:FF:000001">
    <property type="entry name" value="30S ribosomal protein S4"/>
    <property type="match status" value="1"/>
</dbReference>
<dbReference type="FunFam" id="3.10.290.10:FF:000001">
    <property type="entry name" value="30S ribosomal protein S4"/>
    <property type="match status" value="1"/>
</dbReference>
<dbReference type="Gene3D" id="1.10.1050.10">
    <property type="entry name" value="Ribosomal Protein S4 Delta 41, Chain A, domain 1"/>
    <property type="match status" value="1"/>
</dbReference>
<dbReference type="Gene3D" id="3.10.290.10">
    <property type="entry name" value="RNA-binding S4 domain"/>
    <property type="match status" value="1"/>
</dbReference>
<dbReference type="HAMAP" id="MF_01306_B">
    <property type="entry name" value="Ribosomal_uS4_B"/>
    <property type="match status" value="1"/>
</dbReference>
<dbReference type="InterPro" id="IPR022801">
    <property type="entry name" value="Ribosomal_uS4"/>
</dbReference>
<dbReference type="InterPro" id="IPR005709">
    <property type="entry name" value="Ribosomal_uS4_bac-type"/>
</dbReference>
<dbReference type="InterPro" id="IPR018079">
    <property type="entry name" value="Ribosomal_uS4_CS"/>
</dbReference>
<dbReference type="InterPro" id="IPR001912">
    <property type="entry name" value="Ribosomal_uS4_N"/>
</dbReference>
<dbReference type="InterPro" id="IPR002942">
    <property type="entry name" value="S4_RNA-bd"/>
</dbReference>
<dbReference type="InterPro" id="IPR036986">
    <property type="entry name" value="S4_RNA-bd_sf"/>
</dbReference>
<dbReference type="NCBIfam" id="NF003717">
    <property type="entry name" value="PRK05327.1"/>
    <property type="match status" value="1"/>
</dbReference>
<dbReference type="NCBIfam" id="TIGR01017">
    <property type="entry name" value="rpsD_bact"/>
    <property type="match status" value="1"/>
</dbReference>
<dbReference type="PANTHER" id="PTHR11831">
    <property type="entry name" value="30S 40S RIBOSOMAL PROTEIN"/>
    <property type="match status" value="1"/>
</dbReference>
<dbReference type="PANTHER" id="PTHR11831:SF4">
    <property type="entry name" value="SMALL RIBOSOMAL SUBUNIT PROTEIN US4M"/>
    <property type="match status" value="1"/>
</dbReference>
<dbReference type="Pfam" id="PF00163">
    <property type="entry name" value="Ribosomal_S4"/>
    <property type="match status" value="1"/>
</dbReference>
<dbReference type="Pfam" id="PF01479">
    <property type="entry name" value="S4"/>
    <property type="match status" value="1"/>
</dbReference>
<dbReference type="SMART" id="SM01390">
    <property type="entry name" value="Ribosomal_S4"/>
    <property type="match status" value="1"/>
</dbReference>
<dbReference type="SMART" id="SM00363">
    <property type="entry name" value="S4"/>
    <property type="match status" value="1"/>
</dbReference>
<dbReference type="SUPFAM" id="SSF55174">
    <property type="entry name" value="Alpha-L RNA-binding motif"/>
    <property type="match status" value="1"/>
</dbReference>
<dbReference type="PROSITE" id="PS00632">
    <property type="entry name" value="RIBOSOMAL_S4"/>
    <property type="match status" value="1"/>
</dbReference>
<dbReference type="PROSITE" id="PS50889">
    <property type="entry name" value="S4"/>
    <property type="match status" value="1"/>
</dbReference>
<evidence type="ECO:0000255" key="1">
    <source>
        <dbReference type="HAMAP-Rule" id="MF_01306"/>
    </source>
</evidence>
<evidence type="ECO:0000305" key="2"/>
<sequence>MARYTGPTCKLARREGADLFLKSGIRSLDSKCKVTQLPGMHGASARRQKGTEYGLQLREKQKIRRIYGILEKQFRLYYKKASQKKGSTGENLLSLLECRLDNVVYRMGFASTRAEARQLVSHKSIMVNGLVVNIPSYQVSVNDKISIREKAKKQSRIQLALELSGQSTQPQWLDVDNKTLKGVFKNVPSRDELPSDIQEHLIVELYSK</sequence>
<accession>A5CXI8</accession>
<keyword id="KW-1185">Reference proteome</keyword>
<keyword id="KW-0687">Ribonucleoprotein</keyword>
<keyword id="KW-0689">Ribosomal protein</keyword>
<keyword id="KW-0694">RNA-binding</keyword>
<keyword id="KW-0699">rRNA-binding</keyword>
<feature type="chain" id="PRO_0000322349" description="Small ribosomal subunit protein uS4">
    <location>
        <begin position="1"/>
        <end position="208"/>
    </location>
</feature>
<feature type="domain" description="S4 RNA-binding" evidence="1">
    <location>
        <begin position="98"/>
        <end position="160"/>
    </location>
</feature>
<proteinExistence type="inferred from homology"/>